<proteinExistence type="inferred from homology"/>
<feature type="chain" id="PRO_0000287856" description="NADH-quinone oxidoreductase subunit E">
    <location>
        <begin position="1"/>
        <end position="170"/>
    </location>
</feature>
<feature type="binding site" evidence="2">
    <location>
        <position position="93"/>
    </location>
    <ligand>
        <name>[2Fe-2S] cluster</name>
        <dbReference type="ChEBI" id="CHEBI:190135"/>
    </ligand>
</feature>
<feature type="binding site" evidence="2">
    <location>
        <position position="98"/>
    </location>
    <ligand>
        <name>[2Fe-2S] cluster</name>
        <dbReference type="ChEBI" id="CHEBI:190135"/>
    </ligand>
</feature>
<feature type="binding site" evidence="2">
    <location>
        <position position="134"/>
    </location>
    <ligand>
        <name>[2Fe-2S] cluster</name>
        <dbReference type="ChEBI" id="CHEBI:190135"/>
    </ligand>
</feature>
<feature type="binding site" evidence="2">
    <location>
        <position position="138"/>
    </location>
    <ligand>
        <name>[2Fe-2S] cluster</name>
        <dbReference type="ChEBI" id="CHEBI:190135"/>
    </ligand>
</feature>
<dbReference type="EC" id="7.1.1.-"/>
<dbReference type="EMBL" id="AE017197">
    <property type="protein sequence ID" value="AAU03822.1"/>
    <property type="molecule type" value="Genomic_DNA"/>
</dbReference>
<dbReference type="RefSeq" id="WP_011190806.1">
    <property type="nucleotide sequence ID" value="NC_006142.1"/>
</dbReference>
<dbReference type="SMR" id="Q68X20"/>
<dbReference type="KEGG" id="rty:RT0342"/>
<dbReference type="eggNOG" id="COG1905">
    <property type="taxonomic scope" value="Bacteria"/>
</dbReference>
<dbReference type="HOGENOM" id="CLU_054362_2_0_5"/>
<dbReference type="OrthoDB" id="9807941at2"/>
<dbReference type="Proteomes" id="UP000000604">
    <property type="component" value="Chromosome"/>
</dbReference>
<dbReference type="GO" id="GO:0051537">
    <property type="term" value="F:2 iron, 2 sulfur cluster binding"/>
    <property type="evidence" value="ECO:0007669"/>
    <property type="project" value="UniProtKB-KW"/>
</dbReference>
<dbReference type="GO" id="GO:0046872">
    <property type="term" value="F:metal ion binding"/>
    <property type="evidence" value="ECO:0007669"/>
    <property type="project" value="UniProtKB-KW"/>
</dbReference>
<dbReference type="GO" id="GO:0003954">
    <property type="term" value="F:NADH dehydrogenase activity"/>
    <property type="evidence" value="ECO:0007669"/>
    <property type="project" value="TreeGrafter"/>
</dbReference>
<dbReference type="GO" id="GO:0048038">
    <property type="term" value="F:quinone binding"/>
    <property type="evidence" value="ECO:0007669"/>
    <property type="project" value="UniProtKB-KW"/>
</dbReference>
<dbReference type="CDD" id="cd03064">
    <property type="entry name" value="TRX_Fd_NuoE"/>
    <property type="match status" value="1"/>
</dbReference>
<dbReference type="FunFam" id="3.40.30.10:FF:000022">
    <property type="entry name" value="NADH dehydrogenase flavoprotein 2, mitochondrial"/>
    <property type="match status" value="1"/>
</dbReference>
<dbReference type="FunFam" id="1.10.10.1590:FF:000001">
    <property type="entry name" value="NADH-quinone oxidoreductase subunit E"/>
    <property type="match status" value="1"/>
</dbReference>
<dbReference type="Gene3D" id="3.40.30.10">
    <property type="entry name" value="Glutaredoxin"/>
    <property type="match status" value="1"/>
</dbReference>
<dbReference type="Gene3D" id="1.10.10.1590">
    <property type="entry name" value="NADH-quinone oxidoreductase subunit E"/>
    <property type="match status" value="1"/>
</dbReference>
<dbReference type="InterPro" id="IPR002023">
    <property type="entry name" value="NuoE-like"/>
</dbReference>
<dbReference type="InterPro" id="IPR042128">
    <property type="entry name" value="NuoE_dom"/>
</dbReference>
<dbReference type="InterPro" id="IPR041921">
    <property type="entry name" value="NuoE_N"/>
</dbReference>
<dbReference type="InterPro" id="IPR036249">
    <property type="entry name" value="Thioredoxin-like_sf"/>
</dbReference>
<dbReference type="NCBIfam" id="TIGR01958">
    <property type="entry name" value="nuoE_fam"/>
    <property type="match status" value="1"/>
</dbReference>
<dbReference type="NCBIfam" id="NF005725">
    <property type="entry name" value="PRK07539.1-5"/>
    <property type="match status" value="1"/>
</dbReference>
<dbReference type="PANTHER" id="PTHR10371:SF3">
    <property type="entry name" value="NADH DEHYDROGENASE [UBIQUINONE] FLAVOPROTEIN 2, MITOCHONDRIAL"/>
    <property type="match status" value="1"/>
</dbReference>
<dbReference type="PANTHER" id="PTHR10371">
    <property type="entry name" value="NADH DEHYDROGENASE UBIQUINONE FLAVOPROTEIN 2, MITOCHONDRIAL"/>
    <property type="match status" value="1"/>
</dbReference>
<dbReference type="Pfam" id="PF01257">
    <property type="entry name" value="2Fe-2S_thioredx"/>
    <property type="match status" value="1"/>
</dbReference>
<dbReference type="PIRSF" id="PIRSF000216">
    <property type="entry name" value="NADH_DH_24kDa"/>
    <property type="match status" value="1"/>
</dbReference>
<dbReference type="SUPFAM" id="SSF52833">
    <property type="entry name" value="Thioredoxin-like"/>
    <property type="match status" value="1"/>
</dbReference>
<dbReference type="PROSITE" id="PS01099">
    <property type="entry name" value="COMPLEX1_24K"/>
    <property type="match status" value="1"/>
</dbReference>
<comment type="function">
    <text evidence="1">NDH-1 shuttles electrons from NADH, via FMN and iron-sulfur (Fe-S) centers, to quinones in the respiratory chain. Couples the redox reaction to proton translocation (for every two electrons transferred, four hydrogen ions are translocated across the cytoplasmic membrane), and thus conserves the redox energy in a proton gradient (By similarity).</text>
</comment>
<comment type="catalytic activity">
    <reaction>
        <text>a quinone + NADH + 5 H(+)(in) = a quinol + NAD(+) + 4 H(+)(out)</text>
        <dbReference type="Rhea" id="RHEA:57888"/>
        <dbReference type="ChEBI" id="CHEBI:15378"/>
        <dbReference type="ChEBI" id="CHEBI:24646"/>
        <dbReference type="ChEBI" id="CHEBI:57540"/>
        <dbReference type="ChEBI" id="CHEBI:57945"/>
        <dbReference type="ChEBI" id="CHEBI:132124"/>
    </reaction>
</comment>
<comment type="cofactor">
    <cofactor evidence="3">
        <name>[2Fe-2S] cluster</name>
        <dbReference type="ChEBI" id="CHEBI:190135"/>
    </cofactor>
    <text evidence="3">Binds 1 [2Fe-2S] cluster.</text>
</comment>
<comment type="similarity">
    <text evidence="3">Belongs to the complex I 24 kDa subunit family.</text>
</comment>
<organism>
    <name type="scientific">Rickettsia typhi (strain ATCC VR-144 / Wilmington)</name>
    <dbReference type="NCBI Taxonomy" id="257363"/>
    <lineage>
        <taxon>Bacteria</taxon>
        <taxon>Pseudomonadati</taxon>
        <taxon>Pseudomonadota</taxon>
        <taxon>Alphaproteobacteria</taxon>
        <taxon>Rickettsiales</taxon>
        <taxon>Rickettsiaceae</taxon>
        <taxon>Rickettsieae</taxon>
        <taxon>Rickettsia</taxon>
        <taxon>typhus group</taxon>
    </lineage>
</organism>
<accession>Q68X20</accession>
<name>NUOE_RICTY</name>
<protein>
    <recommendedName>
        <fullName>NADH-quinone oxidoreductase subunit E</fullName>
        <ecNumber>7.1.1.-</ecNumber>
    </recommendedName>
    <alternativeName>
        <fullName>NADH dehydrogenase I subunit E</fullName>
    </alternativeName>
    <alternativeName>
        <fullName>NDH-1 subunit E</fullName>
    </alternativeName>
</protein>
<sequence>MNTKTTNFTFAFDKKNLNLAETIIKKYPPNGKRSAILPLLDLAQRQNGGWLHISAIEYVANMLEMPYMRAYEVATFYSMFNLSPVGKYHIQVCTTTPCWLRGSDDIMKICEKKLAIKHKETTKDQKFTLSEIECLGACVNAPVVQINDDYYEDLNEAKMEKLIEQYLNDL</sequence>
<keyword id="KW-0001">2Fe-2S</keyword>
<keyword id="KW-0408">Iron</keyword>
<keyword id="KW-0411">Iron-sulfur</keyword>
<keyword id="KW-0479">Metal-binding</keyword>
<keyword id="KW-0520">NAD</keyword>
<keyword id="KW-0874">Quinone</keyword>
<keyword id="KW-1278">Translocase</keyword>
<gene>
    <name type="primary">nuoE</name>
    <name type="ordered locus">RT0342</name>
</gene>
<reference key="1">
    <citation type="journal article" date="2004" name="J. Bacteriol.">
        <title>Complete genome sequence of Rickettsia typhi and comparison with sequences of other Rickettsiae.</title>
        <authorList>
            <person name="McLeod M.P."/>
            <person name="Qin X."/>
            <person name="Karpathy S.E."/>
            <person name="Gioia J."/>
            <person name="Highlander S.K."/>
            <person name="Fox G.E."/>
            <person name="McNeill T.Z."/>
            <person name="Jiang H."/>
            <person name="Muzny D."/>
            <person name="Jacob L.S."/>
            <person name="Hawes A.C."/>
            <person name="Sodergren E."/>
            <person name="Gill R."/>
            <person name="Hume J."/>
            <person name="Morgan M."/>
            <person name="Fan G."/>
            <person name="Amin A.G."/>
            <person name="Gibbs R.A."/>
            <person name="Hong C."/>
            <person name="Yu X.-J."/>
            <person name="Walker D.H."/>
            <person name="Weinstock G.M."/>
        </authorList>
    </citation>
    <scope>NUCLEOTIDE SEQUENCE [LARGE SCALE GENOMIC DNA]</scope>
    <source>
        <strain>ATCC VR-144 / Wilmington</strain>
    </source>
</reference>
<evidence type="ECO:0000250" key="1"/>
<evidence type="ECO:0000255" key="2"/>
<evidence type="ECO:0000305" key="3"/>